<comment type="function">
    <text evidence="1">One of the primary rRNA binding proteins, it binds directly to 16S rRNA central domain where it helps coordinate assembly of the platform of the 30S subunit.</text>
</comment>
<comment type="subunit">
    <text evidence="1">Part of the 30S ribosomal subunit. Contacts proteins S5 and S12.</text>
</comment>
<comment type="similarity">
    <text evidence="1">Belongs to the universal ribosomal protein uS8 family.</text>
</comment>
<evidence type="ECO:0000255" key="1">
    <source>
        <dbReference type="HAMAP-Rule" id="MF_01302"/>
    </source>
</evidence>
<evidence type="ECO:0000305" key="2"/>
<keyword id="KW-1185">Reference proteome</keyword>
<keyword id="KW-0687">Ribonucleoprotein</keyword>
<keyword id="KW-0689">Ribosomal protein</keyword>
<keyword id="KW-0694">RNA-binding</keyword>
<keyword id="KW-0699">rRNA-binding</keyword>
<proteinExistence type="inferred from homology"/>
<accession>Q2GH42</accession>
<organism>
    <name type="scientific">Ehrlichia chaffeensis (strain ATCC CRL-10679 / Arkansas)</name>
    <dbReference type="NCBI Taxonomy" id="205920"/>
    <lineage>
        <taxon>Bacteria</taxon>
        <taxon>Pseudomonadati</taxon>
        <taxon>Pseudomonadota</taxon>
        <taxon>Alphaproteobacteria</taxon>
        <taxon>Rickettsiales</taxon>
        <taxon>Anaplasmataceae</taxon>
        <taxon>Ehrlichia</taxon>
    </lineage>
</organism>
<dbReference type="EMBL" id="CP000236">
    <property type="protein sequence ID" value="ABD44671.1"/>
    <property type="molecule type" value="Genomic_DNA"/>
</dbReference>
<dbReference type="RefSeq" id="WP_011452590.1">
    <property type="nucleotide sequence ID" value="NC_007799.1"/>
</dbReference>
<dbReference type="SMR" id="Q2GH42"/>
<dbReference type="STRING" id="205920.ECH_0423"/>
<dbReference type="KEGG" id="ech:ECH_0423"/>
<dbReference type="eggNOG" id="COG0096">
    <property type="taxonomic scope" value="Bacteria"/>
</dbReference>
<dbReference type="HOGENOM" id="CLU_098428_0_0_5"/>
<dbReference type="OrthoDB" id="9802617at2"/>
<dbReference type="Proteomes" id="UP000008320">
    <property type="component" value="Chromosome"/>
</dbReference>
<dbReference type="GO" id="GO:1990904">
    <property type="term" value="C:ribonucleoprotein complex"/>
    <property type="evidence" value="ECO:0007669"/>
    <property type="project" value="UniProtKB-KW"/>
</dbReference>
<dbReference type="GO" id="GO:0005840">
    <property type="term" value="C:ribosome"/>
    <property type="evidence" value="ECO:0007669"/>
    <property type="project" value="UniProtKB-KW"/>
</dbReference>
<dbReference type="GO" id="GO:0019843">
    <property type="term" value="F:rRNA binding"/>
    <property type="evidence" value="ECO:0007669"/>
    <property type="project" value="UniProtKB-UniRule"/>
</dbReference>
<dbReference type="GO" id="GO:0003735">
    <property type="term" value="F:structural constituent of ribosome"/>
    <property type="evidence" value="ECO:0007669"/>
    <property type="project" value="InterPro"/>
</dbReference>
<dbReference type="GO" id="GO:0006412">
    <property type="term" value="P:translation"/>
    <property type="evidence" value="ECO:0007669"/>
    <property type="project" value="UniProtKB-UniRule"/>
</dbReference>
<dbReference type="FunFam" id="3.30.1490.10:FF:000001">
    <property type="entry name" value="30S ribosomal protein S8"/>
    <property type="match status" value="1"/>
</dbReference>
<dbReference type="Gene3D" id="3.30.1370.30">
    <property type="match status" value="1"/>
</dbReference>
<dbReference type="Gene3D" id="3.30.1490.10">
    <property type="match status" value="1"/>
</dbReference>
<dbReference type="HAMAP" id="MF_01302_B">
    <property type="entry name" value="Ribosomal_uS8_B"/>
    <property type="match status" value="1"/>
</dbReference>
<dbReference type="InterPro" id="IPR000630">
    <property type="entry name" value="Ribosomal_uS8"/>
</dbReference>
<dbReference type="InterPro" id="IPR047863">
    <property type="entry name" value="Ribosomal_uS8_CS"/>
</dbReference>
<dbReference type="InterPro" id="IPR035987">
    <property type="entry name" value="Ribosomal_uS8_sf"/>
</dbReference>
<dbReference type="NCBIfam" id="NF001109">
    <property type="entry name" value="PRK00136.1"/>
    <property type="match status" value="1"/>
</dbReference>
<dbReference type="PANTHER" id="PTHR11758">
    <property type="entry name" value="40S RIBOSOMAL PROTEIN S15A"/>
    <property type="match status" value="1"/>
</dbReference>
<dbReference type="Pfam" id="PF00410">
    <property type="entry name" value="Ribosomal_S8"/>
    <property type="match status" value="1"/>
</dbReference>
<dbReference type="SUPFAM" id="SSF56047">
    <property type="entry name" value="Ribosomal protein S8"/>
    <property type="match status" value="1"/>
</dbReference>
<dbReference type="PROSITE" id="PS00053">
    <property type="entry name" value="RIBOSOMAL_S8"/>
    <property type="match status" value="1"/>
</dbReference>
<gene>
    <name evidence="1" type="primary">rpsH</name>
    <name type="ordered locus">ECH_0423</name>
</gene>
<feature type="chain" id="PRO_0000290831" description="Small ribosomal subunit protein uS8">
    <location>
        <begin position="1"/>
        <end position="132"/>
    </location>
</feature>
<protein>
    <recommendedName>
        <fullName evidence="1">Small ribosomal subunit protein uS8</fullName>
    </recommendedName>
    <alternativeName>
        <fullName evidence="2">30S ribosomal protein S8</fullName>
    </alternativeName>
</protein>
<reference key="1">
    <citation type="journal article" date="2006" name="PLoS Genet.">
        <title>Comparative genomics of emerging human ehrlichiosis agents.</title>
        <authorList>
            <person name="Dunning Hotopp J.C."/>
            <person name="Lin M."/>
            <person name="Madupu R."/>
            <person name="Crabtree J."/>
            <person name="Angiuoli S.V."/>
            <person name="Eisen J.A."/>
            <person name="Seshadri R."/>
            <person name="Ren Q."/>
            <person name="Wu M."/>
            <person name="Utterback T.R."/>
            <person name="Smith S."/>
            <person name="Lewis M."/>
            <person name="Khouri H."/>
            <person name="Zhang C."/>
            <person name="Niu H."/>
            <person name="Lin Q."/>
            <person name="Ohashi N."/>
            <person name="Zhi N."/>
            <person name="Nelson W.C."/>
            <person name="Brinkac L.M."/>
            <person name="Dodson R.J."/>
            <person name="Rosovitz M.J."/>
            <person name="Sundaram J.P."/>
            <person name="Daugherty S.C."/>
            <person name="Davidsen T."/>
            <person name="Durkin A.S."/>
            <person name="Gwinn M.L."/>
            <person name="Haft D.H."/>
            <person name="Selengut J.D."/>
            <person name="Sullivan S.A."/>
            <person name="Zafar N."/>
            <person name="Zhou L."/>
            <person name="Benahmed F."/>
            <person name="Forberger H."/>
            <person name="Halpin R."/>
            <person name="Mulligan S."/>
            <person name="Robinson J."/>
            <person name="White O."/>
            <person name="Rikihisa Y."/>
            <person name="Tettelin H."/>
        </authorList>
    </citation>
    <scope>NUCLEOTIDE SEQUENCE [LARGE SCALE GENOMIC DNA]</scope>
    <source>
        <strain>ATCC CRL-10679 / Arkansas</strain>
    </source>
</reference>
<sequence>MSLSDPIANFLTSIRNGQLSMNKVIVVSYSYVIHAILQILLSEGYIDGFTEKSKGSNIKFFEVKLKYYNGAPVISQIARISKPGKRCYCSAKDMPKFYNGLGLYIISTSKGIMSDYNARKSGVGGEILCGVF</sequence>
<name>RS8_EHRCR</name>